<evidence type="ECO:0000255" key="1">
    <source>
        <dbReference type="HAMAP-Rule" id="MF_01633"/>
    </source>
</evidence>
<feature type="chain" id="PRO_1000069785" description="7-cyano-7-deazaguanine synthase">
    <location>
        <begin position="1"/>
        <end position="233"/>
    </location>
</feature>
<feature type="binding site" evidence="1">
    <location>
        <begin position="7"/>
        <end position="17"/>
    </location>
    <ligand>
        <name>ATP</name>
        <dbReference type="ChEBI" id="CHEBI:30616"/>
    </ligand>
</feature>
<feature type="binding site" evidence="1">
    <location>
        <position position="185"/>
    </location>
    <ligand>
        <name>Zn(2+)</name>
        <dbReference type="ChEBI" id="CHEBI:29105"/>
    </ligand>
</feature>
<feature type="binding site" evidence="1">
    <location>
        <position position="193"/>
    </location>
    <ligand>
        <name>Zn(2+)</name>
        <dbReference type="ChEBI" id="CHEBI:29105"/>
    </ligand>
</feature>
<feature type="binding site" evidence="1">
    <location>
        <position position="196"/>
    </location>
    <ligand>
        <name>Zn(2+)</name>
        <dbReference type="ChEBI" id="CHEBI:29105"/>
    </ligand>
</feature>
<feature type="binding site" evidence="1">
    <location>
        <position position="199"/>
    </location>
    <ligand>
        <name>Zn(2+)</name>
        <dbReference type="ChEBI" id="CHEBI:29105"/>
    </ligand>
</feature>
<comment type="function">
    <text evidence="1">Catalyzes the ATP-dependent conversion of 7-carboxy-7-deazaguanine (CDG) to 7-cyano-7-deazaguanine (preQ(0)).</text>
</comment>
<comment type="catalytic activity">
    <reaction evidence="1">
        <text>7-carboxy-7-deazaguanine + NH4(+) + ATP = 7-cyano-7-deazaguanine + ADP + phosphate + H2O + H(+)</text>
        <dbReference type="Rhea" id="RHEA:27982"/>
        <dbReference type="ChEBI" id="CHEBI:15377"/>
        <dbReference type="ChEBI" id="CHEBI:15378"/>
        <dbReference type="ChEBI" id="CHEBI:28938"/>
        <dbReference type="ChEBI" id="CHEBI:30616"/>
        <dbReference type="ChEBI" id="CHEBI:43474"/>
        <dbReference type="ChEBI" id="CHEBI:45075"/>
        <dbReference type="ChEBI" id="CHEBI:61036"/>
        <dbReference type="ChEBI" id="CHEBI:456216"/>
        <dbReference type="EC" id="6.3.4.20"/>
    </reaction>
</comment>
<comment type="cofactor">
    <cofactor evidence="1">
        <name>Zn(2+)</name>
        <dbReference type="ChEBI" id="CHEBI:29105"/>
    </cofactor>
    <text evidence="1">Binds 1 zinc ion per subunit.</text>
</comment>
<comment type="pathway">
    <text evidence="1">Purine metabolism; 7-cyano-7-deazaguanine biosynthesis.</text>
</comment>
<comment type="similarity">
    <text evidence="1">Belongs to the QueC family.</text>
</comment>
<organism>
    <name type="scientific">Paracoccus denitrificans (strain Pd 1222)</name>
    <dbReference type="NCBI Taxonomy" id="318586"/>
    <lineage>
        <taxon>Bacteria</taxon>
        <taxon>Pseudomonadati</taxon>
        <taxon>Pseudomonadota</taxon>
        <taxon>Alphaproteobacteria</taxon>
        <taxon>Rhodobacterales</taxon>
        <taxon>Paracoccaceae</taxon>
        <taxon>Paracoccus</taxon>
    </lineage>
</organism>
<sequence>MKTIVVCSGGLDSVSLAHMVAAQGGLTRLISFDYGQRHRKELDYAALAARRLGVPHHVIDMRGVGAVLTGSALTGGAEVPDGHYAEETMRITVVPNRNAIMLTVAFGMAAAMGDQAVATAVHGGDHFIYPDCRPAFTQAFQQMQDAALDGYAQARLLTPFVHRTKADIVTEGARHDTPFAETWSCYKGGALHCGRCGTCVERREAFHLAGIPDPTAYEDADFWRQAIAERERA</sequence>
<keyword id="KW-0067">ATP-binding</keyword>
<keyword id="KW-0436">Ligase</keyword>
<keyword id="KW-0479">Metal-binding</keyword>
<keyword id="KW-0547">Nucleotide-binding</keyword>
<keyword id="KW-0671">Queuosine biosynthesis</keyword>
<keyword id="KW-1185">Reference proteome</keyword>
<keyword id="KW-0862">Zinc</keyword>
<gene>
    <name evidence="1" type="primary">queC</name>
    <name type="ordered locus">Pden_4185</name>
</gene>
<reference key="1">
    <citation type="submission" date="2006-12" db="EMBL/GenBank/DDBJ databases">
        <title>Complete sequence of chromosome 2 of Paracoccus denitrificans PD1222.</title>
        <authorList>
            <person name="Copeland A."/>
            <person name="Lucas S."/>
            <person name="Lapidus A."/>
            <person name="Barry K."/>
            <person name="Detter J.C."/>
            <person name="Glavina del Rio T."/>
            <person name="Hammon N."/>
            <person name="Israni S."/>
            <person name="Dalin E."/>
            <person name="Tice H."/>
            <person name="Pitluck S."/>
            <person name="Munk A.C."/>
            <person name="Brettin T."/>
            <person name="Bruce D."/>
            <person name="Han C."/>
            <person name="Tapia R."/>
            <person name="Gilna P."/>
            <person name="Schmutz J."/>
            <person name="Larimer F."/>
            <person name="Land M."/>
            <person name="Hauser L."/>
            <person name="Kyrpides N."/>
            <person name="Lykidis A."/>
            <person name="Spiro S."/>
            <person name="Richardson D.J."/>
            <person name="Moir J.W.B."/>
            <person name="Ferguson S.J."/>
            <person name="van Spanning R.J.M."/>
            <person name="Richardson P."/>
        </authorList>
    </citation>
    <scope>NUCLEOTIDE SEQUENCE [LARGE SCALE GENOMIC DNA]</scope>
    <source>
        <strain>Pd 1222</strain>
    </source>
</reference>
<accession>A1B9Q5</accession>
<protein>
    <recommendedName>
        <fullName evidence="1">7-cyano-7-deazaguanine synthase</fullName>
        <ecNumber evidence="1">6.3.4.20</ecNumber>
    </recommendedName>
    <alternativeName>
        <fullName evidence="1">7-cyano-7-carbaguanine synthase</fullName>
    </alternativeName>
    <alternativeName>
        <fullName evidence="1">PreQ(0) synthase</fullName>
    </alternativeName>
    <alternativeName>
        <fullName evidence="1">Queuosine biosynthesis protein QueC</fullName>
    </alternativeName>
</protein>
<proteinExistence type="inferred from homology"/>
<dbReference type="EC" id="6.3.4.20" evidence="1"/>
<dbReference type="EMBL" id="CP000490">
    <property type="protein sequence ID" value="ABL72249.1"/>
    <property type="molecule type" value="Genomic_DNA"/>
</dbReference>
<dbReference type="RefSeq" id="WP_011750414.1">
    <property type="nucleotide sequence ID" value="NC_008687.1"/>
</dbReference>
<dbReference type="SMR" id="A1B9Q5"/>
<dbReference type="STRING" id="318586.Pden_4185"/>
<dbReference type="EnsemblBacteria" id="ABL72249">
    <property type="protein sequence ID" value="ABL72249"/>
    <property type="gene ID" value="Pden_4185"/>
</dbReference>
<dbReference type="GeneID" id="93453851"/>
<dbReference type="KEGG" id="pde:Pden_4185"/>
<dbReference type="eggNOG" id="COG0603">
    <property type="taxonomic scope" value="Bacteria"/>
</dbReference>
<dbReference type="HOGENOM" id="CLU_081854_1_0_5"/>
<dbReference type="OrthoDB" id="9789567at2"/>
<dbReference type="UniPathway" id="UPA00391"/>
<dbReference type="Proteomes" id="UP000000361">
    <property type="component" value="Chromosome 2"/>
</dbReference>
<dbReference type="GO" id="GO:0005524">
    <property type="term" value="F:ATP binding"/>
    <property type="evidence" value="ECO:0007669"/>
    <property type="project" value="UniProtKB-UniRule"/>
</dbReference>
<dbReference type="GO" id="GO:0016879">
    <property type="term" value="F:ligase activity, forming carbon-nitrogen bonds"/>
    <property type="evidence" value="ECO:0007669"/>
    <property type="project" value="UniProtKB-UniRule"/>
</dbReference>
<dbReference type="GO" id="GO:0008270">
    <property type="term" value="F:zinc ion binding"/>
    <property type="evidence" value="ECO:0007669"/>
    <property type="project" value="UniProtKB-UniRule"/>
</dbReference>
<dbReference type="GO" id="GO:0008616">
    <property type="term" value="P:queuosine biosynthetic process"/>
    <property type="evidence" value="ECO:0007669"/>
    <property type="project" value="UniProtKB-UniRule"/>
</dbReference>
<dbReference type="CDD" id="cd01995">
    <property type="entry name" value="QueC-like"/>
    <property type="match status" value="1"/>
</dbReference>
<dbReference type="Gene3D" id="3.40.50.620">
    <property type="entry name" value="HUPs"/>
    <property type="match status" value="1"/>
</dbReference>
<dbReference type="HAMAP" id="MF_01633">
    <property type="entry name" value="QueC"/>
    <property type="match status" value="1"/>
</dbReference>
<dbReference type="InterPro" id="IPR018317">
    <property type="entry name" value="QueC"/>
</dbReference>
<dbReference type="InterPro" id="IPR014729">
    <property type="entry name" value="Rossmann-like_a/b/a_fold"/>
</dbReference>
<dbReference type="NCBIfam" id="TIGR00364">
    <property type="entry name" value="7-cyano-7-deazaguanine synthase QueC"/>
    <property type="match status" value="1"/>
</dbReference>
<dbReference type="PANTHER" id="PTHR42914">
    <property type="entry name" value="7-CYANO-7-DEAZAGUANINE SYNTHASE"/>
    <property type="match status" value="1"/>
</dbReference>
<dbReference type="PANTHER" id="PTHR42914:SF1">
    <property type="entry name" value="7-CYANO-7-DEAZAGUANINE SYNTHASE"/>
    <property type="match status" value="1"/>
</dbReference>
<dbReference type="Pfam" id="PF06508">
    <property type="entry name" value="QueC"/>
    <property type="match status" value="1"/>
</dbReference>
<dbReference type="PIRSF" id="PIRSF006293">
    <property type="entry name" value="ExsB"/>
    <property type="match status" value="1"/>
</dbReference>
<dbReference type="SUPFAM" id="SSF52402">
    <property type="entry name" value="Adenine nucleotide alpha hydrolases-like"/>
    <property type="match status" value="1"/>
</dbReference>
<name>QUEC_PARDP</name>